<name>FABPI_HUMAN</name>
<comment type="function">
    <text>FABPs are thought to play a role in the intracellular transport of long-chain fatty acids and their acyl-CoA esters. FABP2 is probably involved in triglyceride-rich lipoprotein synthesis. Binds saturated long-chain fatty acids with a high affinity, but binds with a lower affinity to unsaturated long-chain fatty acids. FABP2 may also help maintain energy homeostasis by functioning as a lipid sensor.</text>
</comment>
<comment type="interaction">
    <interactant intactId="EBI-3905109">
        <id>P12104</id>
    </interactant>
    <interactant intactId="EBI-712648">
        <id>O95994</id>
        <label>AGR2</label>
    </interactant>
    <organismsDiffer>false</organismsDiffer>
    <experiments>4</experiments>
</comment>
<comment type="interaction">
    <interactant intactId="EBI-3905109">
        <id>P12104</id>
    </interactant>
    <interactant intactId="EBI-750109">
        <id>Q9NYB0</id>
        <label>TERF2IP</label>
    </interactant>
    <organismsDiffer>false</organismsDiffer>
    <experiments>2</experiments>
</comment>
<comment type="subcellular location">
    <subcellularLocation>
        <location>Cytoplasm</location>
    </subcellularLocation>
</comment>
<comment type="tissue specificity">
    <text evidence="5">Expressed in the small intestine and at much lower levels in the large intestine. Highest expression levels in the jejunum.</text>
</comment>
<comment type="induction">
    <text evidence="2">By EGF.</text>
</comment>
<comment type="domain">
    <text>Forms a beta-barrel structure that accommodates the hydrophobic ligand in its interior.</text>
</comment>
<comment type="similarity">
    <text evidence="9">Belongs to the calycin superfamily. Fatty-acid binding protein (FABP) family.</text>
</comment>
<protein>
    <recommendedName>
        <fullName>Fatty acid-binding protein, intestinal</fullName>
    </recommendedName>
    <alternativeName>
        <fullName>Fatty acid-binding protein 2</fullName>
    </alternativeName>
    <alternativeName>
        <fullName>Intestinal-type fatty acid-binding protein</fullName>
        <shortName>I-FABP</shortName>
    </alternativeName>
</protein>
<keyword id="KW-0002">3D-structure</keyword>
<keyword id="KW-0007">Acetylation</keyword>
<keyword id="KW-0963">Cytoplasm</keyword>
<keyword id="KW-0446">Lipid-binding</keyword>
<keyword id="KW-1267">Proteomics identification</keyword>
<keyword id="KW-1185">Reference proteome</keyword>
<keyword id="KW-0813">Transport</keyword>
<evidence type="ECO:0000250" key="1">
    <source>
        <dbReference type="UniProtKB" id="P02693"/>
    </source>
</evidence>
<evidence type="ECO:0000269" key="2">
    <source>
    </source>
</evidence>
<evidence type="ECO:0000269" key="3">
    <source>
    </source>
</evidence>
<evidence type="ECO:0000269" key="4">
    <source>
    </source>
</evidence>
<evidence type="ECO:0000269" key="5">
    <source>
    </source>
</evidence>
<evidence type="ECO:0000269" key="6">
    <source>
    </source>
</evidence>
<evidence type="ECO:0000269" key="7">
    <source>
    </source>
</evidence>
<evidence type="ECO:0000269" key="8">
    <source>
    </source>
</evidence>
<evidence type="ECO:0000305" key="9"/>
<evidence type="ECO:0007829" key="10">
    <source>
        <dbReference type="PDB" id="1KZW"/>
    </source>
</evidence>
<evidence type="ECO:0007829" key="11">
    <source>
        <dbReference type="PDB" id="3AKM"/>
    </source>
</evidence>
<evidence type="ECO:0007829" key="12">
    <source>
        <dbReference type="PDB" id="3IFB"/>
    </source>
</evidence>
<gene>
    <name type="primary">FABP2</name>
    <name type="synonym">FABPI</name>
</gene>
<accession>P12104</accession>
<accession>Q2NKJ1</accession>
<organism>
    <name type="scientific">Homo sapiens</name>
    <name type="common">Human</name>
    <dbReference type="NCBI Taxonomy" id="9606"/>
    <lineage>
        <taxon>Eukaryota</taxon>
        <taxon>Metazoa</taxon>
        <taxon>Chordata</taxon>
        <taxon>Craniata</taxon>
        <taxon>Vertebrata</taxon>
        <taxon>Euteleostomi</taxon>
        <taxon>Mammalia</taxon>
        <taxon>Eutheria</taxon>
        <taxon>Euarchontoglires</taxon>
        <taxon>Primates</taxon>
        <taxon>Haplorrhini</taxon>
        <taxon>Catarrhini</taxon>
        <taxon>Hominidae</taxon>
        <taxon>Homo</taxon>
    </lineage>
</organism>
<dbReference type="EMBL" id="M18079">
    <property type="protein sequence ID" value="AAA52417.1"/>
    <property type="molecule type" value="Genomic_DNA"/>
</dbReference>
<dbReference type="EMBL" id="AC092656">
    <property type="status" value="NOT_ANNOTATED_CDS"/>
    <property type="molecule type" value="Genomic_DNA"/>
</dbReference>
<dbReference type="EMBL" id="BC069466">
    <property type="protein sequence ID" value="AAH69466.1"/>
    <property type="molecule type" value="mRNA"/>
</dbReference>
<dbReference type="EMBL" id="BC069617">
    <property type="protein sequence ID" value="AAH69617.1"/>
    <property type="molecule type" value="mRNA"/>
</dbReference>
<dbReference type="EMBL" id="BC069625">
    <property type="protein sequence ID" value="AAH69625.1"/>
    <property type="molecule type" value="mRNA"/>
</dbReference>
<dbReference type="EMBL" id="BC069637">
    <property type="protein sequence ID" value="AAH69637.1"/>
    <property type="molecule type" value="mRNA"/>
</dbReference>
<dbReference type="EMBL" id="BC111791">
    <property type="protein sequence ID" value="AAI11792.1"/>
    <property type="molecule type" value="mRNA"/>
</dbReference>
<dbReference type="CCDS" id="CCDS3712.1"/>
<dbReference type="PIR" id="A29781">
    <property type="entry name" value="FZHUI"/>
</dbReference>
<dbReference type="RefSeq" id="NP_000125.2">
    <property type="nucleotide sequence ID" value="NM_000134.4"/>
</dbReference>
<dbReference type="PDB" id="1KZW">
    <property type="method" value="NMR"/>
    <property type="chains" value="A=2-132"/>
</dbReference>
<dbReference type="PDB" id="1KZX">
    <property type="method" value="NMR"/>
    <property type="chains" value="A=2-132"/>
</dbReference>
<dbReference type="PDB" id="2MJI">
    <property type="method" value="NMR"/>
    <property type="chains" value="A=2-132"/>
</dbReference>
<dbReference type="PDB" id="2MO5">
    <property type="method" value="NMR"/>
    <property type="chains" value="A=2-132"/>
</dbReference>
<dbReference type="PDB" id="3AKM">
    <property type="method" value="X-ray"/>
    <property type="resolution" value="1.90 A"/>
    <property type="chains" value="A/B/C/D=2-132"/>
</dbReference>
<dbReference type="PDB" id="3IFB">
    <property type="method" value="NMR"/>
    <property type="chains" value="A=2-132"/>
</dbReference>
<dbReference type="PDB" id="6L7K">
    <property type="method" value="NMR"/>
    <property type="chains" value="A=2-132"/>
</dbReference>
<dbReference type="PDBsum" id="1KZW"/>
<dbReference type="PDBsum" id="1KZX"/>
<dbReference type="PDBsum" id="2MJI"/>
<dbReference type="PDBsum" id="2MO5"/>
<dbReference type="PDBsum" id="3AKM"/>
<dbReference type="PDBsum" id="3IFB"/>
<dbReference type="PDBsum" id="6L7K"/>
<dbReference type="BMRB" id="P12104"/>
<dbReference type="SMR" id="P12104"/>
<dbReference type="BioGRID" id="108467">
    <property type="interactions" value="46"/>
</dbReference>
<dbReference type="FunCoup" id="P12104">
    <property type="interactions" value="138"/>
</dbReference>
<dbReference type="IntAct" id="P12104">
    <property type="interactions" value="4"/>
</dbReference>
<dbReference type="MINT" id="P12104"/>
<dbReference type="STRING" id="9606.ENSP00000274024"/>
<dbReference type="BindingDB" id="P12104"/>
<dbReference type="ChEMBL" id="CHEMBL4879"/>
<dbReference type="DrugBank" id="DB04557">
    <property type="generic name" value="Arachidonic Acid"/>
</dbReference>
<dbReference type="DrugBank" id="DB09213">
    <property type="generic name" value="Dexibuprofen"/>
</dbReference>
<dbReference type="DrugBank" id="DB00783">
    <property type="generic name" value="Estradiol"/>
</dbReference>
<dbReference type="DrugBank" id="DB13952">
    <property type="generic name" value="Estradiol acetate"/>
</dbReference>
<dbReference type="DrugBank" id="DB13953">
    <property type="generic name" value="Estradiol benzoate"/>
</dbReference>
<dbReference type="DrugBank" id="DB13954">
    <property type="generic name" value="Estradiol cypionate"/>
</dbReference>
<dbReference type="DrugBank" id="DB13955">
    <property type="generic name" value="Estradiol dienanthate"/>
</dbReference>
<dbReference type="DrugBank" id="DB13956">
    <property type="generic name" value="Estradiol valerate"/>
</dbReference>
<dbReference type="DrugBank" id="DB01050">
    <property type="generic name" value="Ibuprofen"/>
</dbReference>
<dbReference type="DrugBank" id="DB08231">
    <property type="generic name" value="Myristic acid"/>
</dbReference>
<dbReference type="DrugBank" id="DB03796">
    <property type="generic name" value="Palmitic Acid"/>
</dbReference>
<dbReference type="DrugBank" id="DB01138">
    <property type="generic name" value="Sulfinpyrazone"/>
</dbReference>
<dbReference type="DrugCentral" id="P12104"/>
<dbReference type="SwissLipids" id="SLP:000001520"/>
<dbReference type="iPTMnet" id="P12104"/>
<dbReference type="PhosphoSitePlus" id="P12104"/>
<dbReference type="BioMuta" id="FABP2"/>
<dbReference type="DMDM" id="119805"/>
<dbReference type="jPOST" id="P12104"/>
<dbReference type="MassIVE" id="P12104"/>
<dbReference type="PaxDb" id="9606-ENSP00000274024"/>
<dbReference type="PeptideAtlas" id="P12104"/>
<dbReference type="ProteomicsDB" id="52825"/>
<dbReference type="Antibodypedia" id="26669">
    <property type="antibodies" value="595 antibodies from 39 providers"/>
</dbReference>
<dbReference type="CPTC" id="P12104">
    <property type="antibodies" value="2 antibodies"/>
</dbReference>
<dbReference type="DNASU" id="2169"/>
<dbReference type="Ensembl" id="ENST00000274024.4">
    <property type="protein sequence ID" value="ENSP00000274024.3"/>
    <property type="gene ID" value="ENSG00000145384.4"/>
</dbReference>
<dbReference type="GeneID" id="2169"/>
<dbReference type="KEGG" id="hsa:2169"/>
<dbReference type="MANE-Select" id="ENST00000274024.4">
    <property type="protein sequence ID" value="ENSP00000274024.3"/>
    <property type="RefSeq nucleotide sequence ID" value="NM_000134.4"/>
    <property type="RefSeq protein sequence ID" value="NP_000125.2"/>
</dbReference>
<dbReference type="UCSC" id="uc003icw.4">
    <property type="organism name" value="human"/>
</dbReference>
<dbReference type="AGR" id="HGNC:3556"/>
<dbReference type="CTD" id="2169"/>
<dbReference type="DisGeNET" id="2169"/>
<dbReference type="GeneCards" id="FABP2"/>
<dbReference type="HGNC" id="HGNC:3556">
    <property type="gene designation" value="FABP2"/>
</dbReference>
<dbReference type="HPA" id="ENSG00000145384">
    <property type="expression patterns" value="Tissue enriched (intestine)"/>
</dbReference>
<dbReference type="MalaCards" id="FABP2"/>
<dbReference type="MIM" id="134640">
    <property type="type" value="gene"/>
</dbReference>
<dbReference type="neXtProt" id="NX_P12104"/>
<dbReference type="OpenTargets" id="ENSG00000145384"/>
<dbReference type="PharmGKB" id="PA27957"/>
<dbReference type="VEuPathDB" id="HostDB:ENSG00000145384"/>
<dbReference type="eggNOG" id="KOG4015">
    <property type="taxonomic scope" value="Eukaryota"/>
</dbReference>
<dbReference type="GeneTree" id="ENSGT00800000124172"/>
<dbReference type="HOGENOM" id="CLU_113772_3_0_1"/>
<dbReference type="InParanoid" id="P12104"/>
<dbReference type="OMA" id="FMEAMGV"/>
<dbReference type="OrthoDB" id="9991853at2759"/>
<dbReference type="PAN-GO" id="P12104">
    <property type="GO annotations" value="4 GO annotations based on evolutionary models"/>
</dbReference>
<dbReference type="PhylomeDB" id="P12104"/>
<dbReference type="TreeFam" id="TF316894"/>
<dbReference type="PathwayCommons" id="P12104"/>
<dbReference type="Reactome" id="R-HSA-163560">
    <property type="pathway name" value="Triglyceride catabolism"/>
</dbReference>
<dbReference type="SignaLink" id="P12104"/>
<dbReference type="SIGNOR" id="P12104"/>
<dbReference type="BioGRID-ORCS" id="2169">
    <property type="hits" value="17 hits in 1107 CRISPR screens"/>
</dbReference>
<dbReference type="ChiTaRS" id="FABP2">
    <property type="organism name" value="human"/>
</dbReference>
<dbReference type="EvolutionaryTrace" id="P12104"/>
<dbReference type="GeneWiki" id="FABP2"/>
<dbReference type="GenomeRNAi" id="2169"/>
<dbReference type="Pharos" id="P12104">
    <property type="development level" value="Tchem"/>
</dbReference>
<dbReference type="PRO" id="PR:P12104"/>
<dbReference type="Proteomes" id="UP000005640">
    <property type="component" value="Chromosome 4"/>
</dbReference>
<dbReference type="RNAct" id="P12104">
    <property type="molecule type" value="protein"/>
</dbReference>
<dbReference type="Bgee" id="ENSG00000145384">
    <property type="expression patterns" value="Expressed in mucosa of transverse colon and 58 other cell types or tissues"/>
</dbReference>
<dbReference type="GO" id="GO:0045179">
    <property type="term" value="C:apical cortex"/>
    <property type="evidence" value="ECO:0007669"/>
    <property type="project" value="Ensembl"/>
</dbReference>
<dbReference type="GO" id="GO:0005829">
    <property type="term" value="C:cytosol"/>
    <property type="evidence" value="ECO:0000318"/>
    <property type="project" value="GO_Central"/>
</dbReference>
<dbReference type="GO" id="GO:0005902">
    <property type="term" value="C:microvillus"/>
    <property type="evidence" value="ECO:0007669"/>
    <property type="project" value="Ensembl"/>
</dbReference>
<dbReference type="GO" id="GO:0005634">
    <property type="term" value="C:nucleus"/>
    <property type="evidence" value="ECO:0000318"/>
    <property type="project" value="GO_Central"/>
</dbReference>
<dbReference type="GO" id="GO:0005504">
    <property type="term" value="F:fatty acid binding"/>
    <property type="evidence" value="ECO:0000304"/>
    <property type="project" value="ProtInc"/>
</dbReference>
<dbReference type="GO" id="GO:0036041">
    <property type="term" value="F:long-chain fatty acid binding"/>
    <property type="evidence" value="ECO:0000314"/>
    <property type="project" value="GO_Central"/>
</dbReference>
<dbReference type="GO" id="GO:0005324">
    <property type="term" value="F:long-chain fatty acid transmembrane transporter activity"/>
    <property type="evidence" value="ECO:0007669"/>
    <property type="project" value="Ensembl"/>
</dbReference>
<dbReference type="GO" id="GO:0006631">
    <property type="term" value="P:fatty acid metabolic process"/>
    <property type="evidence" value="ECO:0007669"/>
    <property type="project" value="Ensembl"/>
</dbReference>
<dbReference type="GO" id="GO:0015908">
    <property type="term" value="P:fatty acid transport"/>
    <property type="evidence" value="ECO:0000318"/>
    <property type="project" value="GO_Central"/>
</dbReference>
<dbReference type="GO" id="GO:0098856">
    <property type="term" value="P:intestinal lipid absorption"/>
    <property type="evidence" value="ECO:0000315"/>
    <property type="project" value="GO_Central"/>
</dbReference>
<dbReference type="CDD" id="cd19445">
    <property type="entry name" value="FABP2"/>
    <property type="match status" value="1"/>
</dbReference>
<dbReference type="FunFam" id="2.40.128.20:FF:000001">
    <property type="entry name" value="Fatty acid-binding protein, adipocyte"/>
    <property type="match status" value="1"/>
</dbReference>
<dbReference type="Gene3D" id="2.40.128.20">
    <property type="match status" value="1"/>
</dbReference>
<dbReference type="InterPro" id="IPR012674">
    <property type="entry name" value="Calycin"/>
</dbReference>
<dbReference type="InterPro" id="IPR031272">
    <property type="entry name" value="FABP2"/>
</dbReference>
<dbReference type="InterPro" id="IPR000463">
    <property type="entry name" value="Fatty_acid-bd"/>
</dbReference>
<dbReference type="InterPro" id="IPR031259">
    <property type="entry name" value="ILBP"/>
</dbReference>
<dbReference type="InterPro" id="IPR000566">
    <property type="entry name" value="Lipocln_cytosolic_FA-bd_dom"/>
</dbReference>
<dbReference type="PANTHER" id="PTHR11955">
    <property type="entry name" value="FATTY ACID BINDING PROTEIN"/>
    <property type="match status" value="1"/>
</dbReference>
<dbReference type="Pfam" id="PF00061">
    <property type="entry name" value="Lipocalin"/>
    <property type="match status" value="1"/>
</dbReference>
<dbReference type="PRINTS" id="PR00178">
    <property type="entry name" value="FATTYACIDBP"/>
</dbReference>
<dbReference type="SUPFAM" id="SSF50814">
    <property type="entry name" value="Lipocalins"/>
    <property type="match status" value="1"/>
</dbReference>
<dbReference type="PROSITE" id="PS00214">
    <property type="entry name" value="FABP"/>
    <property type="match status" value="1"/>
</dbReference>
<sequence>MAFDSTWKVDRSENYDKFMEKMGVNIVKRKLAAHDNLKLTITQEGNKFTVKESSTFRNIEVVFELGVTFNYNLADGTELRGTWSLEGNKLIGKFKRTDNGNELNTVREIIGDELVQTYVYEGVEAKRIFKKD</sequence>
<feature type="initiator methionine" description="Removed" evidence="1">
    <location>
        <position position="1"/>
    </location>
</feature>
<feature type="chain" id="PRO_0000067328" description="Fatty acid-binding protein, intestinal">
    <location>
        <begin position="2"/>
        <end position="132"/>
    </location>
</feature>
<feature type="binding site" evidence="1">
    <location>
        <position position="83"/>
    </location>
    <ligand>
        <name>hexadecanoate</name>
        <dbReference type="ChEBI" id="CHEBI:7896"/>
    </ligand>
</feature>
<feature type="binding site" evidence="1">
    <location>
        <position position="83"/>
    </location>
    <ligand>
        <name>tetradecanoate</name>
        <dbReference type="ChEBI" id="CHEBI:30807"/>
    </ligand>
</feature>
<feature type="binding site" evidence="1">
    <location>
        <position position="107"/>
    </location>
    <ligand>
        <name>hexadecanoate</name>
        <dbReference type="ChEBI" id="CHEBI:7896"/>
    </ligand>
</feature>
<feature type="binding site" evidence="1">
    <location>
        <position position="107"/>
    </location>
    <ligand>
        <name>tetradecanoate</name>
        <dbReference type="ChEBI" id="CHEBI:30807"/>
    </ligand>
</feature>
<feature type="modified residue" description="N-acetylalanine" evidence="1">
    <location>
        <position position="2"/>
    </location>
</feature>
<feature type="sequence variant" id="VAR_002379" description="May have a lower affinity for long-chain fatty acids, such as oleate and arachidonate, compared to T-55; dbSNP:rs1799883." evidence="3 4 7 8">
    <original>T</original>
    <variation>A</variation>
    <location>
        <position position="55"/>
    </location>
</feature>
<feature type="mutagenesis site" description="Reduced stability." evidence="6">
    <original>L</original>
    <variation>G</variation>
    <location>
        <position position="39"/>
    </location>
</feature>
<feature type="mutagenesis site" description="Localized reduction in stability." evidence="6">
    <original>E</original>
    <variation>G</variation>
    <location>
        <position position="64"/>
    </location>
</feature>
<feature type="mutagenesis site" description="Reduced stability." evidence="6">
    <original>L</original>
    <variation>A</variation>
    <location>
        <position position="65"/>
    </location>
</feature>
<feature type="mutagenesis site" description="Reduced stability." evidence="6">
    <original>L</original>
    <variation>G</variation>
    <location>
        <position position="65"/>
    </location>
</feature>
<feature type="mutagenesis site" description="Localized reduction in stability." evidence="6">
    <original>V</original>
    <variation>G</variation>
    <location>
        <position position="67"/>
    </location>
</feature>
<feature type="mutagenesis site" description="Reduced stability." evidence="6">
    <original>L</original>
    <variation>G</variation>
    <location>
        <position position="90"/>
    </location>
</feature>
<feature type="mutagenesis site" description="Reduced stability." evidence="6">
    <original>V</original>
    <variation>G</variation>
    <location>
        <position position="123"/>
    </location>
</feature>
<feature type="strand" evidence="11">
    <location>
        <begin position="5"/>
        <end position="14"/>
    </location>
</feature>
<feature type="helix" evidence="11">
    <location>
        <begin position="15"/>
        <end position="22"/>
    </location>
</feature>
<feature type="helix" evidence="11">
    <location>
        <begin position="26"/>
        <end position="32"/>
    </location>
</feature>
<feature type="turn" evidence="12">
    <location>
        <begin position="33"/>
        <end position="35"/>
    </location>
</feature>
<feature type="strand" evidence="11">
    <location>
        <begin position="38"/>
        <end position="44"/>
    </location>
</feature>
<feature type="strand" evidence="11">
    <location>
        <begin position="47"/>
        <end position="53"/>
    </location>
</feature>
<feature type="strand" evidence="11">
    <location>
        <begin position="58"/>
        <end position="64"/>
    </location>
</feature>
<feature type="strand" evidence="11">
    <location>
        <begin position="69"/>
        <end position="72"/>
    </location>
</feature>
<feature type="strand" evidence="10">
    <location>
        <begin position="74"/>
        <end position="76"/>
    </location>
</feature>
<feature type="strand" evidence="11">
    <location>
        <begin position="78"/>
        <end position="86"/>
    </location>
</feature>
<feature type="strand" evidence="11">
    <location>
        <begin position="89"/>
        <end position="96"/>
    </location>
</feature>
<feature type="turn" evidence="11">
    <location>
        <begin position="97"/>
        <end position="99"/>
    </location>
</feature>
<feature type="strand" evidence="11">
    <location>
        <begin position="102"/>
        <end position="110"/>
    </location>
</feature>
<feature type="strand" evidence="11">
    <location>
        <begin position="113"/>
        <end position="120"/>
    </location>
</feature>
<feature type="strand" evidence="11">
    <location>
        <begin position="123"/>
        <end position="131"/>
    </location>
</feature>
<proteinExistence type="evidence at protein level"/>
<reference key="1">
    <citation type="journal article" date="1987" name="J. Biol. Chem.">
        <title>The human and rodent intestinal fatty acid binding protein genes. A comparative analysis of their structure, expression, and linkage relationships.</title>
        <authorList>
            <person name="Sweetser D.A."/>
            <person name="Birkenmeier E.H."/>
            <person name="Klisak I.J."/>
            <person name="Zollman S."/>
            <person name="Sparkes R.S."/>
            <person name="Mohandas T."/>
            <person name="Lusis A.J."/>
            <person name="Gordon J.I."/>
        </authorList>
    </citation>
    <scope>NUCLEOTIDE SEQUENCE [GENOMIC DNA]</scope>
    <scope>VARIANT ALA-55</scope>
</reference>
<reference key="2">
    <citation type="journal article" date="2005" name="Nature">
        <title>Generation and annotation of the DNA sequences of human chromosomes 2 and 4.</title>
        <authorList>
            <person name="Hillier L.W."/>
            <person name="Graves T.A."/>
            <person name="Fulton R.S."/>
            <person name="Fulton L.A."/>
            <person name="Pepin K.H."/>
            <person name="Minx P."/>
            <person name="Wagner-McPherson C."/>
            <person name="Layman D."/>
            <person name="Wylie K."/>
            <person name="Sekhon M."/>
            <person name="Becker M.C."/>
            <person name="Fewell G.A."/>
            <person name="Delehaunty K.D."/>
            <person name="Miner T.L."/>
            <person name="Nash W.E."/>
            <person name="Kremitzki C."/>
            <person name="Oddy L."/>
            <person name="Du H."/>
            <person name="Sun H."/>
            <person name="Bradshaw-Cordum H."/>
            <person name="Ali J."/>
            <person name="Carter J."/>
            <person name="Cordes M."/>
            <person name="Harris A."/>
            <person name="Isak A."/>
            <person name="van Brunt A."/>
            <person name="Nguyen C."/>
            <person name="Du F."/>
            <person name="Courtney L."/>
            <person name="Kalicki J."/>
            <person name="Ozersky P."/>
            <person name="Abbott S."/>
            <person name="Armstrong J."/>
            <person name="Belter E.A."/>
            <person name="Caruso L."/>
            <person name="Cedroni M."/>
            <person name="Cotton M."/>
            <person name="Davidson T."/>
            <person name="Desai A."/>
            <person name="Elliott G."/>
            <person name="Erb T."/>
            <person name="Fronick C."/>
            <person name="Gaige T."/>
            <person name="Haakenson W."/>
            <person name="Haglund K."/>
            <person name="Holmes A."/>
            <person name="Harkins R."/>
            <person name="Kim K."/>
            <person name="Kruchowski S.S."/>
            <person name="Strong C.M."/>
            <person name="Grewal N."/>
            <person name="Goyea E."/>
            <person name="Hou S."/>
            <person name="Levy A."/>
            <person name="Martinka S."/>
            <person name="Mead K."/>
            <person name="McLellan M.D."/>
            <person name="Meyer R."/>
            <person name="Randall-Maher J."/>
            <person name="Tomlinson C."/>
            <person name="Dauphin-Kohlberg S."/>
            <person name="Kozlowicz-Reilly A."/>
            <person name="Shah N."/>
            <person name="Swearengen-Shahid S."/>
            <person name="Snider J."/>
            <person name="Strong J.T."/>
            <person name="Thompson J."/>
            <person name="Yoakum M."/>
            <person name="Leonard S."/>
            <person name="Pearman C."/>
            <person name="Trani L."/>
            <person name="Radionenko M."/>
            <person name="Waligorski J.E."/>
            <person name="Wang C."/>
            <person name="Rock S.M."/>
            <person name="Tin-Wollam A.-M."/>
            <person name="Maupin R."/>
            <person name="Latreille P."/>
            <person name="Wendl M.C."/>
            <person name="Yang S.-P."/>
            <person name="Pohl C."/>
            <person name="Wallis J.W."/>
            <person name="Spieth J."/>
            <person name="Bieri T.A."/>
            <person name="Berkowicz N."/>
            <person name="Nelson J.O."/>
            <person name="Osborne J."/>
            <person name="Ding L."/>
            <person name="Meyer R."/>
            <person name="Sabo A."/>
            <person name="Shotland Y."/>
            <person name="Sinha P."/>
            <person name="Wohldmann P.E."/>
            <person name="Cook L.L."/>
            <person name="Hickenbotham M.T."/>
            <person name="Eldred J."/>
            <person name="Williams D."/>
            <person name="Jones T.A."/>
            <person name="She X."/>
            <person name="Ciccarelli F.D."/>
            <person name="Izaurralde E."/>
            <person name="Taylor J."/>
            <person name="Schmutz J."/>
            <person name="Myers R.M."/>
            <person name="Cox D.R."/>
            <person name="Huang X."/>
            <person name="McPherson J.D."/>
            <person name="Mardis E.R."/>
            <person name="Clifton S.W."/>
            <person name="Warren W.C."/>
            <person name="Chinwalla A.T."/>
            <person name="Eddy S.R."/>
            <person name="Marra M.A."/>
            <person name="Ovcharenko I."/>
            <person name="Furey T.S."/>
            <person name="Miller W."/>
            <person name="Eichler E.E."/>
            <person name="Bork P."/>
            <person name="Suyama M."/>
            <person name="Torrents D."/>
            <person name="Waterston R.H."/>
            <person name="Wilson R.K."/>
        </authorList>
    </citation>
    <scope>NUCLEOTIDE SEQUENCE [LARGE SCALE GENOMIC DNA]</scope>
    <scope>VARIANT ALA-55</scope>
</reference>
<reference key="3">
    <citation type="journal article" date="2004" name="Genome Res.">
        <title>The status, quality, and expansion of the NIH full-length cDNA project: the Mammalian Gene Collection (MGC).</title>
        <authorList>
            <consortium name="The MGC Project Team"/>
        </authorList>
    </citation>
    <scope>NUCLEOTIDE SEQUENCE [LARGE SCALE MRNA]</scope>
    <scope>VARIANT ALA-55</scope>
</reference>
<reference key="4">
    <citation type="journal article" date="2003" name="Clin. Biochem.">
        <title>Intestinal-type and liver-type fatty acid-binding protein in the intestine. Tissue distribution and clinical utility.</title>
        <authorList>
            <person name="Pelsers M.M.A.L."/>
            <person name="Namiot Z."/>
            <person name="Kisielewski W."/>
            <person name="Namiot A."/>
            <person name="Januszkiewicz M."/>
            <person name="Hermens W.T."/>
            <person name="Glatz J.F.C."/>
        </authorList>
    </citation>
    <scope>TISSUE SPECIFICITY</scope>
</reference>
<reference key="5">
    <citation type="journal article" date="1999" name="Am. J. Physiol.">
        <title>Epidermal growth factor regulates fatty acid uptake and metabolism in Caco-2 cells.</title>
        <authorList>
            <person name="Darimont C."/>
            <person name="Gradoux N."/>
            <person name="de Pover A."/>
        </authorList>
    </citation>
    <scope>INDUCTION BY EGF</scope>
</reference>
<reference key="6">
    <citation type="journal article" date="2003" name="Biochemistry">
        <title>Consequences of single-site mutations in the intestinal fatty acid binding protein.</title>
        <authorList>
            <person name="Rajabzadeh M."/>
            <person name="Kao J."/>
            <person name="Frieden C."/>
        </authorList>
    </citation>
    <scope>MUTAGENESIS OF LEU-39; GLU-64; LEU-65; VAL-67; LEU-90 AND VAL-123</scope>
</reference>
<reference key="7">
    <citation type="journal article" date="1997" name="J. Biomol. NMR">
        <title>Solution structure of human intestinal fatty acid binding protein: implications for ligand entry and exit.</title>
        <authorList>
            <person name="Zhang F."/>
            <person name="Luecke C."/>
            <person name="Baier L.J."/>
            <person name="Sacchettini J.C."/>
            <person name="Hamilton J.A."/>
        </authorList>
    </citation>
    <scope>STRUCTURE BY NMR</scope>
    <source>
        <tissue>Intestine</tissue>
    </source>
</reference>
<reference key="8">
    <citation type="journal article" date="2003" name="Biochemistry">
        <title>Solution structure of human intestinal fatty acid binding protein with a naturally-occurring single amino acid substitution (A54T) that is associated with altered lipid metabolism.</title>
        <authorList>
            <person name="Zhang F."/>
            <person name="Luecke C."/>
            <person name="Baier L.J."/>
            <person name="Sacchettini J.C."/>
            <person name="Hamilton J.A."/>
        </authorList>
    </citation>
    <scope>STRUCTURE BY NMR</scope>
</reference>
<reference key="9">
    <citation type="journal article" date="1995" name="J. Clin. Invest.">
        <title>An amino acid substitution in the human intestinal fatty acid binding protein is associated with increased fatty acid binding, increased fat oxidation, and insulin resistance.</title>
        <authorList>
            <person name="Baier L.J."/>
            <person name="Sacchettini J.C."/>
            <person name="Knowler W.C."/>
            <person name="Eads J."/>
            <person name="Paolisso G."/>
            <person name="Tataranni P.A."/>
            <person name="Mochizuki H."/>
            <person name="Bennett P.H."/>
            <person name="Bogardus C."/>
            <person name="Prochazka M."/>
        </authorList>
    </citation>
    <scope>CHARACTERIZATION OF VARIANT ALA-55</scope>
</reference>
<reference key="10">
    <citation type="journal article" date="1999" name="Chin. Med. Sci. J.">
        <title>The association of Ala54Thr variant of intestinal fatty acid binding protein gene with general and regional adipose tissue depots.</title>
        <authorList>
            <person name="Kunsan X."/>
            <person name="Taisan Z."/>
            <person name="Weiping J."/>
            <person name="Duoqi S."/>
            <person name="Wei D."/>
            <person name="Jie L."/>
            <person name="Junxi L."/>
            <person name="Rong Z."/>
        </authorList>
    </citation>
    <scope>IDENTIFICATION OF VARIANT ALA-55</scope>
</reference>